<reference key="1">
    <citation type="submission" date="2006-03" db="EMBL/GenBank/DDBJ databases">
        <title>Complete sequence of Rhodopseudomonas palustris BisB5.</title>
        <authorList>
            <consortium name="US DOE Joint Genome Institute"/>
            <person name="Copeland A."/>
            <person name="Lucas S."/>
            <person name="Lapidus A."/>
            <person name="Barry K."/>
            <person name="Detter J.C."/>
            <person name="Glavina del Rio T."/>
            <person name="Hammon N."/>
            <person name="Israni S."/>
            <person name="Dalin E."/>
            <person name="Tice H."/>
            <person name="Pitluck S."/>
            <person name="Chain P."/>
            <person name="Malfatti S."/>
            <person name="Shin M."/>
            <person name="Vergez L."/>
            <person name="Schmutz J."/>
            <person name="Larimer F."/>
            <person name="Land M."/>
            <person name="Hauser L."/>
            <person name="Pelletier D.A."/>
            <person name="Kyrpides N."/>
            <person name="Lykidis A."/>
            <person name="Oda Y."/>
            <person name="Harwood C.S."/>
            <person name="Richardson P."/>
        </authorList>
    </citation>
    <scope>NUCLEOTIDE SEQUENCE [LARGE SCALE GENOMIC DNA]</scope>
    <source>
        <strain>BisB5</strain>
    </source>
</reference>
<comment type="subcellular location">
    <subcellularLocation>
        <location evidence="1">Cell membrane</location>
        <topology evidence="1">Multi-pass membrane protein</topology>
    </subcellularLocation>
</comment>
<comment type="similarity">
    <text evidence="1">Belongs to the UPF0391 family.</text>
</comment>
<keyword id="KW-1003">Cell membrane</keyword>
<keyword id="KW-0472">Membrane</keyword>
<keyword id="KW-0812">Transmembrane</keyword>
<keyword id="KW-1133">Transmembrane helix</keyword>
<protein>
    <recommendedName>
        <fullName evidence="1">UPF0391 membrane protein RPD_2934</fullName>
    </recommendedName>
</protein>
<proteinExistence type="inferred from homology"/>
<name>Y2934_RHOPS</name>
<dbReference type="EMBL" id="CP000283">
    <property type="protein sequence ID" value="ABE40161.1"/>
    <property type="molecule type" value="Genomic_DNA"/>
</dbReference>
<dbReference type="STRING" id="316057.RPD_2934"/>
<dbReference type="KEGG" id="rpd:RPD_2934"/>
<dbReference type="eggNOG" id="COG5487">
    <property type="taxonomic scope" value="Bacteria"/>
</dbReference>
<dbReference type="HOGENOM" id="CLU_187346_1_1_5"/>
<dbReference type="BioCyc" id="RPAL316057:RPD_RS22640-MONOMER"/>
<dbReference type="Proteomes" id="UP000001818">
    <property type="component" value="Chromosome"/>
</dbReference>
<dbReference type="GO" id="GO:0005886">
    <property type="term" value="C:plasma membrane"/>
    <property type="evidence" value="ECO:0007669"/>
    <property type="project" value="UniProtKB-SubCell"/>
</dbReference>
<dbReference type="HAMAP" id="MF_01361">
    <property type="entry name" value="UPF0391"/>
    <property type="match status" value="1"/>
</dbReference>
<dbReference type="InterPro" id="IPR009760">
    <property type="entry name" value="DUF1328"/>
</dbReference>
<dbReference type="NCBIfam" id="NF010232">
    <property type="entry name" value="PRK13682.2-2"/>
    <property type="match status" value="1"/>
</dbReference>
<dbReference type="NCBIfam" id="NF010234">
    <property type="entry name" value="PRK13682.2-5"/>
    <property type="match status" value="1"/>
</dbReference>
<dbReference type="Pfam" id="PF07043">
    <property type="entry name" value="DUF1328"/>
    <property type="match status" value="1"/>
</dbReference>
<dbReference type="PIRSF" id="PIRSF036466">
    <property type="entry name" value="UCP036466"/>
    <property type="match status" value="1"/>
</dbReference>
<gene>
    <name type="ordered locus">RPD_2934</name>
</gene>
<accession>Q135S8</accession>
<feature type="chain" id="PRO_5000112181" description="UPF0391 membrane protein RPD_2934">
    <location>
        <begin position="1"/>
        <end position="57"/>
    </location>
</feature>
<feature type="transmembrane region" description="Helical" evidence="1">
    <location>
        <begin position="6"/>
        <end position="26"/>
    </location>
</feature>
<feature type="transmembrane region" description="Helical" evidence="1">
    <location>
        <begin position="35"/>
        <end position="55"/>
    </location>
</feature>
<evidence type="ECO:0000255" key="1">
    <source>
        <dbReference type="HAMAP-Rule" id="MF_01361"/>
    </source>
</evidence>
<organism>
    <name type="scientific">Rhodopseudomonas palustris (strain BisB5)</name>
    <dbReference type="NCBI Taxonomy" id="316057"/>
    <lineage>
        <taxon>Bacteria</taxon>
        <taxon>Pseudomonadati</taxon>
        <taxon>Pseudomonadota</taxon>
        <taxon>Alphaproteobacteria</taxon>
        <taxon>Hyphomicrobiales</taxon>
        <taxon>Nitrobacteraceae</taxon>
        <taxon>Rhodopseudomonas</taxon>
    </lineage>
</organism>
<sequence>MTILKWALIFLVISVVAGIFGFTGVSAASADLARILFYIFAAIFIVLLILGFTIFRA</sequence>